<name>SMG_ECOSE</name>
<dbReference type="EMBL" id="AP009240">
    <property type="protein sequence ID" value="BAG79083.1"/>
    <property type="molecule type" value="Genomic_DNA"/>
</dbReference>
<dbReference type="RefSeq" id="WP_000460670.1">
    <property type="nucleotide sequence ID" value="NC_011415.1"/>
</dbReference>
<dbReference type="SMR" id="B6I1Z8"/>
<dbReference type="KEGG" id="ecy:ECSE_3559"/>
<dbReference type="HOGENOM" id="CLU_133242_0_0_6"/>
<dbReference type="Proteomes" id="UP000008199">
    <property type="component" value="Chromosome"/>
</dbReference>
<dbReference type="HAMAP" id="MF_00598">
    <property type="entry name" value="Smg"/>
    <property type="match status" value="1"/>
</dbReference>
<dbReference type="InterPro" id="IPR007456">
    <property type="entry name" value="Smg"/>
</dbReference>
<dbReference type="NCBIfam" id="NF002897">
    <property type="entry name" value="PRK03430.1"/>
    <property type="match status" value="1"/>
</dbReference>
<dbReference type="PANTHER" id="PTHR38692">
    <property type="entry name" value="PROTEIN SMG"/>
    <property type="match status" value="1"/>
</dbReference>
<dbReference type="PANTHER" id="PTHR38692:SF1">
    <property type="entry name" value="PROTEIN SMG"/>
    <property type="match status" value="1"/>
</dbReference>
<dbReference type="Pfam" id="PF04361">
    <property type="entry name" value="DUF494"/>
    <property type="match status" value="1"/>
</dbReference>
<proteinExistence type="inferred from homology"/>
<sequence>MFDVLMYLFETYIHTEAELRVDQDKLEQDLTDAGFDREDIYNALLWLEKLADYQEGLAEPMQLASDPLSMRIYTPEECERLDASCRGFLLFLEQIQVLNLETREMVIERVLALDNAEFELDDLKWVILMVLFNIPGCENAYQQMEELLFEVNEGMLH</sequence>
<comment type="similarity">
    <text evidence="1">Belongs to the Smg family.</text>
</comment>
<reference key="1">
    <citation type="journal article" date="2008" name="DNA Res.">
        <title>Complete genome sequence and comparative analysis of the wild-type commensal Escherichia coli strain SE11 isolated from a healthy adult.</title>
        <authorList>
            <person name="Oshima K."/>
            <person name="Toh H."/>
            <person name="Ogura Y."/>
            <person name="Sasamoto H."/>
            <person name="Morita H."/>
            <person name="Park S.-H."/>
            <person name="Ooka T."/>
            <person name="Iyoda S."/>
            <person name="Taylor T.D."/>
            <person name="Hayashi T."/>
            <person name="Itoh K."/>
            <person name="Hattori M."/>
        </authorList>
    </citation>
    <scope>NUCLEOTIDE SEQUENCE [LARGE SCALE GENOMIC DNA]</scope>
    <source>
        <strain>SE11</strain>
    </source>
</reference>
<gene>
    <name evidence="1" type="primary">smg</name>
    <name type="ordered locus">ECSE_3559</name>
</gene>
<evidence type="ECO:0000255" key="1">
    <source>
        <dbReference type="HAMAP-Rule" id="MF_00598"/>
    </source>
</evidence>
<protein>
    <recommendedName>
        <fullName evidence="1">Protein Smg</fullName>
    </recommendedName>
</protein>
<accession>B6I1Z8</accession>
<organism>
    <name type="scientific">Escherichia coli (strain SE11)</name>
    <dbReference type="NCBI Taxonomy" id="409438"/>
    <lineage>
        <taxon>Bacteria</taxon>
        <taxon>Pseudomonadati</taxon>
        <taxon>Pseudomonadota</taxon>
        <taxon>Gammaproteobacteria</taxon>
        <taxon>Enterobacterales</taxon>
        <taxon>Enterobacteriaceae</taxon>
        <taxon>Escherichia</taxon>
    </lineage>
</organism>
<feature type="chain" id="PRO_1000129890" description="Protein Smg">
    <location>
        <begin position="1"/>
        <end position="157"/>
    </location>
</feature>